<sequence length="1549" mass="172012">MISISKRTSIARINLSEFHTISKIDRYPWLNKEKDACGVGFIAHLDNKFGHKLMMNALEALATMEHRGACSADEESGDGAGILFSIPWKFFVEWSLRYKQFKINISQAAVAMLFLPCLSSDIQVSKNIVEEIFQDEDFIVIGWREVPYVKEVLGPLALRNMPQIYQIVVQSKRYQGRSLDFHLYRVRRKIEKEITVRAYSWAKDFYFCSCSNHTIVYKGMVKSTSLGQFYQDLYNPDFEISFAVFHRRFSTNTMPRWPLAQPMRILGHNGEINTLLGNLKWMEARESSLNHPTLNEVASIGPVVNVSNSDSANLDSVVELFLHVGHSCPEALMFLIPEAYENNPKLKYHQNLISFYEYCAGFQEAWDGPALIVFSDGHTVGASLDRNGLRPARYCVTEDNVLILASEGGVLNLDPSLIRLKGRLGPGEMIVLDLQEKLLMSNLEIKNKIASLRPYSDWIKQNRQVLIPTSFLTSTTLPLQEVFKRQTCFGYTSEDIELVIENMAIQGKEPTFCMGDDTPLAVLSGKSHVLYDYFKQRFAQVTNPPIDSLRESLVMSISSYLGSKTNSFEESSEKILKIKTPILSENDLVLIKNSELLTETLVTTFEAHFDSPQANGQSLFSTINQLCKQAKNLIQAGTKIIILSDKVCFESRTESYIPPLLVVGSLHQYLIKQGVRQKVSLIVETGQCWSTHHFACLLGYGASAVCPYLALETVRHWWMSERTQNLMSKGKMPNLTLIEVQNNYCKSVERGLLKILSKMGISLLTSYIGAQIFEILGLGKEVVDLAFEGTVSRIGGLSFADLAMETIDLCSAGFSKLNKKKLDNHGFVQYRPGGEYHLNNPEMSKALHKAVRENNYTLYEAYKQLLANRPPTNIRDLLEFNFRSCSVPLEKVENIFEITKRFCTGGMSLGALSREAHETLSIAMNRIGGKSNSGEGGEDSLRFTVLTDVDETGNSPSFPHLKGLKNGDSLSSAIKQIASGRFGVTPEYLVNAKQLEIKISQGAKPGEGGQLPGKKVSPYIATLRACKPGVTLISPPPHHDIYSIEDLAQLIFDLHQVNPECKVSVKLVSEIGVGTIAVGVAKAGAEIIQISGHDGGTGASPLSSIKHAGVPWELGLHEVHCLLVENNLREKVILRVDGGLRTGQDVVMAALLGADEYGFGTIAMIAGGCIMARVCHTNSCPVGVATQKEELRMRYPGVPENVVNYFIFLAEEIRVILSKLGFETLSQIIGRKDLINHNFDKKLCKTHCIDTSIFFNIKTNEYNFLEIPGGHSKKLKTSLLDYELLNSSDILYAIDNHKTLEKHIKISNSDRSVGAKLAGRLAKQYKNEGFRGSLILNFYGTAGQSFGSFNIKGVTLRLIGEANDYVGKSMSGGEIVIVPPSEVAFDASEQVILGNTCLYGATGGFLFAYGAAGERFAVRNSNAFSVLEGVGDHACEYMTGGRVVVLGKAGRNIAAGMTGGIAYFLDEYSNLPEKVNLDIVRIQRVVTNEARKQLIQLIEKHVLKTGSKKAVLILQQWEIFIHYFWQIVPPSESETSETNYFVENKVLAN</sequence>
<name>GLTB_CYACA</name>
<gene>
    <name type="primary">gltB</name>
</gene>
<geneLocation type="chloroplast"/>
<accession>O19906</accession>
<protein>
    <recommendedName>
        <fullName>Ferredoxin-dependent glutamate synthase</fullName>
        <ecNumber>1.4.7.1</ecNumber>
    </recommendedName>
    <alternativeName>
        <fullName>Fd-GOGAT</fullName>
    </alternativeName>
</protein>
<reference key="1">
    <citation type="journal article" date="2000" name="J. Mol. Evol.">
        <title>The structure and gene repertoire of an ancient red algal plastid genome.</title>
        <authorList>
            <person name="Gloeckner G."/>
            <person name="Rosenthal A."/>
            <person name="Valentin K.-U."/>
        </authorList>
    </citation>
    <scope>NUCLEOTIDE SEQUENCE [LARGE SCALE GENOMIC DNA]</scope>
    <source>
        <strain>RK-1</strain>
    </source>
</reference>
<comment type="catalytic activity">
    <reaction>
        <text>2 oxidized [2Fe-2S]-[ferredoxin] + 2 L-glutamate = L-glutamine + 2 reduced [2Fe-2S]-[ferredoxin] + 2-oxoglutarate + 2 H(+)</text>
        <dbReference type="Rhea" id="RHEA:12128"/>
        <dbReference type="Rhea" id="RHEA-COMP:10000"/>
        <dbReference type="Rhea" id="RHEA-COMP:10001"/>
        <dbReference type="ChEBI" id="CHEBI:15378"/>
        <dbReference type="ChEBI" id="CHEBI:16810"/>
        <dbReference type="ChEBI" id="CHEBI:29985"/>
        <dbReference type="ChEBI" id="CHEBI:33737"/>
        <dbReference type="ChEBI" id="CHEBI:33738"/>
        <dbReference type="ChEBI" id="CHEBI:58359"/>
        <dbReference type="EC" id="1.4.7.1"/>
    </reaction>
</comment>
<comment type="cofactor">
    <cofactor>
        <name>[3Fe-4S] cluster</name>
        <dbReference type="ChEBI" id="CHEBI:21137"/>
    </cofactor>
    <text>Binds 1 [3Fe-4S] cluster.</text>
</comment>
<comment type="cofactor">
    <cofactor>
        <name>FAD</name>
        <dbReference type="ChEBI" id="CHEBI:57692"/>
    </cofactor>
</comment>
<comment type="cofactor">
    <cofactor>
        <name>FMN</name>
        <dbReference type="ChEBI" id="CHEBI:58210"/>
    </cofactor>
</comment>
<comment type="pathway">
    <text>Amino-acid biosynthesis; L-glutamate biosynthesis via GLT pathway; L-glutamate from 2-oxoglutarate and L-glutamine (ferredoxin route): step 1/1.</text>
</comment>
<comment type="pathway">
    <text>Energy metabolism; nitrogen metabolism.</text>
</comment>
<comment type="subunit">
    <text evidence="1">Monomer.</text>
</comment>
<comment type="subcellular location">
    <subcellularLocation>
        <location>Plastid</location>
        <location>Chloroplast stroma</location>
    </subcellularLocation>
</comment>
<comment type="similarity">
    <text evidence="3">Belongs to the glutamate synthase family.</text>
</comment>
<feature type="chain" id="PRO_0000170791" description="Ferredoxin-dependent glutamate synthase">
    <location>
        <begin position="1"/>
        <end position="1549"/>
    </location>
</feature>
<feature type="domain" description="Glutamine amidotransferase type-2" evidence="2">
    <location>
        <begin position="37"/>
        <end position="435"/>
    </location>
</feature>
<feature type="active site" description="For GATase activity" evidence="1">
    <location>
        <position position="37"/>
    </location>
</feature>
<feature type="binding site" evidence="1">
    <location>
        <begin position="1116"/>
        <end position="1173"/>
    </location>
    <ligand>
        <name>FMN</name>
        <dbReference type="ChEBI" id="CHEBI:58210"/>
    </ligand>
</feature>
<feature type="binding site" evidence="1">
    <location>
        <position position="1169"/>
    </location>
    <ligand>
        <name>[3Fe-4S] cluster</name>
        <dbReference type="ChEBI" id="CHEBI:21137"/>
    </ligand>
</feature>
<feature type="binding site" evidence="1">
    <location>
        <position position="1175"/>
    </location>
    <ligand>
        <name>[3Fe-4S] cluster</name>
        <dbReference type="ChEBI" id="CHEBI:21137"/>
    </ligand>
</feature>
<feature type="binding site" evidence="1">
    <location>
        <position position="1180"/>
    </location>
    <ligand>
        <name>[3Fe-4S] cluster</name>
        <dbReference type="ChEBI" id="CHEBI:21137"/>
    </ligand>
</feature>
<proteinExistence type="inferred from homology"/>
<keyword id="KW-0003">3Fe-4S</keyword>
<keyword id="KW-0028">Amino-acid biosynthesis</keyword>
<keyword id="KW-0150">Chloroplast</keyword>
<keyword id="KW-0274">FAD</keyword>
<keyword id="KW-0285">Flavoprotein</keyword>
<keyword id="KW-0288">FMN</keyword>
<keyword id="KW-0314">Glutamate biosynthesis</keyword>
<keyword id="KW-0315">Glutamine amidotransferase</keyword>
<keyword id="KW-0408">Iron</keyword>
<keyword id="KW-0411">Iron-sulfur</keyword>
<keyword id="KW-0479">Metal-binding</keyword>
<keyword id="KW-0560">Oxidoreductase</keyword>
<keyword id="KW-0934">Plastid</keyword>
<organism>
    <name type="scientific">Cyanidium caldarium</name>
    <name type="common">Red alga</name>
    <dbReference type="NCBI Taxonomy" id="2771"/>
    <lineage>
        <taxon>Eukaryota</taxon>
        <taxon>Rhodophyta</taxon>
        <taxon>Bangiophyceae</taxon>
        <taxon>Cyanidiales</taxon>
        <taxon>Cyanidiaceae</taxon>
        <taxon>Cyanidium</taxon>
    </lineage>
</organism>
<evidence type="ECO:0000250" key="1"/>
<evidence type="ECO:0000255" key="2">
    <source>
        <dbReference type="PROSITE-ProRule" id="PRU00609"/>
    </source>
</evidence>
<evidence type="ECO:0000305" key="3"/>
<dbReference type="EC" id="1.4.7.1"/>
<dbReference type="EMBL" id="AF022186">
    <property type="protein sequence ID" value="AAB82683.1"/>
    <property type="molecule type" value="Genomic_DNA"/>
</dbReference>
<dbReference type="PIR" id="T11974">
    <property type="entry name" value="T11974"/>
</dbReference>
<dbReference type="RefSeq" id="NP_045078.1">
    <property type="nucleotide sequence ID" value="NC_001840.1"/>
</dbReference>
<dbReference type="SMR" id="O19906"/>
<dbReference type="GeneID" id="800212"/>
<dbReference type="UniPathway" id="UPA00045"/>
<dbReference type="UniPathway" id="UPA00634">
    <property type="reaction ID" value="UER00691"/>
</dbReference>
<dbReference type="GO" id="GO:0009570">
    <property type="term" value="C:chloroplast stroma"/>
    <property type="evidence" value="ECO:0007669"/>
    <property type="project" value="UniProtKB-SubCell"/>
</dbReference>
<dbReference type="GO" id="GO:0051538">
    <property type="term" value="F:3 iron, 4 sulfur cluster binding"/>
    <property type="evidence" value="ECO:0007669"/>
    <property type="project" value="UniProtKB-KW"/>
</dbReference>
<dbReference type="GO" id="GO:0016041">
    <property type="term" value="F:glutamate synthase (ferredoxin) activity"/>
    <property type="evidence" value="ECO:0007669"/>
    <property type="project" value="UniProtKB-EC"/>
</dbReference>
<dbReference type="GO" id="GO:0046872">
    <property type="term" value="F:metal ion binding"/>
    <property type="evidence" value="ECO:0007669"/>
    <property type="project" value="UniProtKB-KW"/>
</dbReference>
<dbReference type="GO" id="GO:0019676">
    <property type="term" value="P:ammonia assimilation cycle"/>
    <property type="evidence" value="ECO:0007669"/>
    <property type="project" value="TreeGrafter"/>
</dbReference>
<dbReference type="GO" id="GO:0097054">
    <property type="term" value="P:L-glutamate biosynthetic process"/>
    <property type="evidence" value="ECO:0007669"/>
    <property type="project" value="UniProtKB-UniPathway"/>
</dbReference>
<dbReference type="CDD" id="cd00982">
    <property type="entry name" value="gltB_C"/>
    <property type="match status" value="1"/>
</dbReference>
<dbReference type="CDD" id="cd00713">
    <property type="entry name" value="GltS"/>
    <property type="match status" value="1"/>
</dbReference>
<dbReference type="CDD" id="cd02808">
    <property type="entry name" value="GltS_FMN"/>
    <property type="match status" value="1"/>
</dbReference>
<dbReference type="FunFam" id="3.20.20.70:FF:000084">
    <property type="entry name" value="Ferredoxin-dependent glutamate synthase, chloroplastic"/>
    <property type="match status" value="1"/>
</dbReference>
<dbReference type="FunFam" id="3.60.20.10:FF:000001">
    <property type="entry name" value="Glutamate synthase, large subunit"/>
    <property type="match status" value="1"/>
</dbReference>
<dbReference type="Gene3D" id="3.20.20.70">
    <property type="entry name" value="Aldolase class I"/>
    <property type="match status" value="2"/>
</dbReference>
<dbReference type="Gene3D" id="2.160.20.60">
    <property type="entry name" value="Glutamate synthase, alpha subunit, C-terminal domain"/>
    <property type="match status" value="1"/>
</dbReference>
<dbReference type="Gene3D" id="3.60.20.10">
    <property type="entry name" value="Glutamine Phosphoribosylpyrophosphate, subunit 1, domain 1"/>
    <property type="match status" value="1"/>
</dbReference>
<dbReference type="InterPro" id="IPR013785">
    <property type="entry name" value="Aldolase_TIM"/>
</dbReference>
<dbReference type="InterPro" id="IPR050711">
    <property type="entry name" value="ET-N_metabolism_enzyme"/>
</dbReference>
<dbReference type="InterPro" id="IPR017932">
    <property type="entry name" value="GATase_2_dom"/>
</dbReference>
<dbReference type="InterPro" id="IPR002489">
    <property type="entry name" value="Glu_synth_asu_C"/>
</dbReference>
<dbReference type="InterPro" id="IPR036485">
    <property type="entry name" value="Glu_synth_asu_C_sf"/>
</dbReference>
<dbReference type="InterPro" id="IPR006982">
    <property type="entry name" value="Glu_synth_centr_N"/>
</dbReference>
<dbReference type="InterPro" id="IPR002932">
    <property type="entry name" value="Glu_synthdom"/>
</dbReference>
<dbReference type="InterPro" id="IPR029055">
    <property type="entry name" value="Ntn_hydrolases_N"/>
</dbReference>
<dbReference type="NCBIfam" id="NF008730">
    <property type="entry name" value="PRK11750.1"/>
    <property type="match status" value="1"/>
</dbReference>
<dbReference type="PANTHER" id="PTHR11938">
    <property type="entry name" value="FAD NADPH DEHYDROGENASE/OXIDOREDUCTASE"/>
    <property type="match status" value="1"/>
</dbReference>
<dbReference type="PANTHER" id="PTHR11938:SF133">
    <property type="entry name" value="GLUTAMATE SYNTHASE (NADH)"/>
    <property type="match status" value="1"/>
</dbReference>
<dbReference type="Pfam" id="PF00310">
    <property type="entry name" value="GATase_2"/>
    <property type="match status" value="1"/>
</dbReference>
<dbReference type="Pfam" id="PF04898">
    <property type="entry name" value="Glu_syn_central"/>
    <property type="match status" value="1"/>
</dbReference>
<dbReference type="Pfam" id="PF01645">
    <property type="entry name" value="Glu_synthase"/>
    <property type="match status" value="1"/>
</dbReference>
<dbReference type="Pfam" id="PF01493">
    <property type="entry name" value="GXGXG"/>
    <property type="match status" value="1"/>
</dbReference>
<dbReference type="SUPFAM" id="SSF69336">
    <property type="entry name" value="Alpha subunit of glutamate synthase, C-terminal domain"/>
    <property type="match status" value="1"/>
</dbReference>
<dbReference type="SUPFAM" id="SSF51395">
    <property type="entry name" value="FMN-linked oxidoreductases"/>
    <property type="match status" value="1"/>
</dbReference>
<dbReference type="SUPFAM" id="SSF56235">
    <property type="entry name" value="N-terminal nucleophile aminohydrolases (Ntn hydrolases)"/>
    <property type="match status" value="1"/>
</dbReference>
<dbReference type="PROSITE" id="PS51278">
    <property type="entry name" value="GATASE_TYPE_2"/>
    <property type="match status" value="1"/>
</dbReference>